<proteinExistence type="evidence at protein level"/>
<reference key="1">
    <citation type="journal article" date="2005" name="Nature">
        <title>Virology: independent virus development outside a host.</title>
        <authorList>
            <person name="Haring M."/>
            <person name="Vestergaard G."/>
            <person name="Rachel R."/>
            <person name="Chen L."/>
            <person name="Garrett R.A."/>
            <person name="Prangishvili D."/>
        </authorList>
    </citation>
    <scope>NUCLEOTIDE SEQUENCE [GENOMIC DNA]</scope>
</reference>
<reference evidence="2" key="2">
    <citation type="submission" date="2008-11" db="PDB data bank">
        <title>Structure of the structural protein P131 of the archaeal virus Acidianus Two-tailed virus (ATV).</title>
        <authorList>
            <person name="Goulet A."/>
            <person name="Vestergaard G."/>
            <person name="Scheele U."/>
            <person name="Campanacci V."/>
            <person name="Garrett R.A."/>
            <person name="Cambillau C."/>
        </authorList>
    </citation>
    <scope>X-RAY CRYSTALLOGRAPHY (1.70 ANGSTROMS)</scope>
</reference>
<organismHost>
    <name type="scientific">Acidianus convivator</name>
    <dbReference type="NCBI Taxonomy" id="269667"/>
</organismHost>
<name>Y131_ATV</name>
<protein>
    <recommendedName>
        <fullName>Structural protein ORF131</fullName>
    </recommendedName>
</protein>
<accession>Q3V4Q3</accession>
<evidence type="ECO:0000305" key="1"/>
<evidence type="ECO:0007744" key="2">
    <source>
        <dbReference type="PDB" id="3FAJ"/>
    </source>
</evidence>
<evidence type="ECO:0007829" key="3">
    <source>
        <dbReference type="PDB" id="3FAJ"/>
    </source>
</evidence>
<feature type="chain" id="PRO_0000389075" description="Structural protein ORF131">
    <location>
        <begin position="1"/>
        <end position="131"/>
    </location>
</feature>
<feature type="helix" evidence="3">
    <location>
        <begin position="11"/>
        <end position="23"/>
    </location>
</feature>
<feature type="helix" evidence="3">
    <location>
        <begin position="31"/>
        <end position="46"/>
    </location>
</feature>
<feature type="helix" evidence="3">
    <location>
        <begin position="49"/>
        <end position="66"/>
    </location>
</feature>
<feature type="helix" evidence="3">
    <location>
        <begin position="67"/>
        <end position="69"/>
    </location>
</feature>
<feature type="helix" evidence="3">
    <location>
        <begin position="83"/>
        <end position="91"/>
    </location>
</feature>
<feature type="helix" evidence="3">
    <location>
        <begin position="93"/>
        <end position="103"/>
    </location>
</feature>
<feature type="helix" evidence="3">
    <location>
        <begin position="105"/>
        <end position="112"/>
    </location>
</feature>
<comment type="subcellular location">
    <subcellularLocation>
        <location>Virion</location>
    </subcellularLocation>
</comment>
<comment type="similarity">
    <text evidence="1">Belongs to the viral ORF131/RIP family.</text>
</comment>
<dbReference type="EMBL" id="AJ888457">
    <property type="protein sequence ID" value="CAI59911.1"/>
    <property type="molecule type" value="Genomic_DNA"/>
</dbReference>
<dbReference type="RefSeq" id="YP_319893.1">
    <property type="nucleotide sequence ID" value="NC_007409.1"/>
</dbReference>
<dbReference type="PDB" id="3FAJ">
    <property type="method" value="X-ray"/>
    <property type="resolution" value="1.70 A"/>
    <property type="chains" value="A=1-131"/>
</dbReference>
<dbReference type="PDBsum" id="3FAJ"/>
<dbReference type="SMR" id="Q3V4Q3"/>
<dbReference type="GeneID" id="4484267"/>
<dbReference type="KEGG" id="vg:4484267"/>
<dbReference type="OrthoDB" id="22439at10239"/>
<dbReference type="EvolutionaryTrace" id="Q3V4Q3"/>
<dbReference type="Proteomes" id="UP000002150">
    <property type="component" value="Genome"/>
</dbReference>
<dbReference type="GO" id="GO:0044423">
    <property type="term" value="C:virion component"/>
    <property type="evidence" value="ECO:0007669"/>
    <property type="project" value="UniProtKB-KW"/>
</dbReference>
<dbReference type="Gene3D" id="1.20.120.950">
    <property type="entry name" value="Uncharacterised protein DUF5062"/>
    <property type="match status" value="1"/>
</dbReference>
<dbReference type="InterPro" id="IPR054511">
    <property type="entry name" value="RIP_P131-like"/>
</dbReference>
<dbReference type="Pfam" id="PF22238">
    <property type="entry name" value="RIP_P131-like"/>
    <property type="match status" value="1"/>
</dbReference>
<sequence>MAKYEPKKGDYAGGAVKILDMFENGQLGYPEVTLKLAGEEANARRAGDERTKEAIHAIVKMISDAMKPYRNKGSGFQSQPIPGEVIAQVTSNPEYQQAKAFLASPATQVRNIEREEVLSKGAKKLAQAMAS</sequence>
<organism>
    <name type="scientific">Acidianus two-tailed virus</name>
    <name type="common">ATV</name>
    <dbReference type="NCBI Taxonomy" id="315953"/>
    <lineage>
        <taxon>Viruses</taxon>
        <taxon>Viruses incertae sedis</taxon>
        <taxon>Bicaudaviridae</taxon>
        <taxon>Bicaudavirus</taxon>
    </lineage>
</organism>
<keyword id="KW-0002">3D-structure</keyword>
<keyword id="KW-1185">Reference proteome</keyword>
<keyword id="KW-0946">Virion</keyword>